<evidence type="ECO:0000255" key="1">
    <source>
        <dbReference type="HAMAP-Rule" id="MF_00004"/>
    </source>
</evidence>
<sequence>MDLKATIRTLPNWPIEGVMFRDITTLLQDPAAFKEAINRFYDRYRTMKIDKIVGIDARGLIFGAPLAYKLEVGFVPVRKKGKIPFRTIGAAYSLEYGESMVEIHEDAILKGERVVVVDDLIATGGTVKATIDLVEKLGGEVVECAFVIDLPDLKGREKIRDYKMFALMEFEGE</sequence>
<reference key="1">
    <citation type="submission" date="2007-10" db="EMBL/GenBank/DDBJ databases">
        <title>Complete sequence of Desulfococcus oleovorans Hxd3.</title>
        <authorList>
            <consortium name="US DOE Joint Genome Institute"/>
            <person name="Copeland A."/>
            <person name="Lucas S."/>
            <person name="Lapidus A."/>
            <person name="Barry K."/>
            <person name="Glavina del Rio T."/>
            <person name="Dalin E."/>
            <person name="Tice H."/>
            <person name="Pitluck S."/>
            <person name="Kiss H."/>
            <person name="Brettin T."/>
            <person name="Bruce D."/>
            <person name="Detter J.C."/>
            <person name="Han C."/>
            <person name="Schmutz J."/>
            <person name="Larimer F."/>
            <person name="Land M."/>
            <person name="Hauser L."/>
            <person name="Kyrpides N."/>
            <person name="Kim E."/>
            <person name="Wawrik B."/>
            <person name="Richardson P."/>
        </authorList>
    </citation>
    <scope>NUCLEOTIDE SEQUENCE [LARGE SCALE GENOMIC DNA]</scope>
    <source>
        <strain>DSM 6200 / JCM 39069 / Hxd3</strain>
    </source>
</reference>
<feature type="chain" id="PRO_1000116239" description="Adenine phosphoribosyltransferase">
    <location>
        <begin position="1"/>
        <end position="173"/>
    </location>
</feature>
<comment type="function">
    <text evidence="1">Catalyzes a salvage reaction resulting in the formation of AMP, that is energically less costly than de novo synthesis.</text>
</comment>
<comment type="catalytic activity">
    <reaction evidence="1">
        <text>AMP + diphosphate = 5-phospho-alpha-D-ribose 1-diphosphate + adenine</text>
        <dbReference type="Rhea" id="RHEA:16609"/>
        <dbReference type="ChEBI" id="CHEBI:16708"/>
        <dbReference type="ChEBI" id="CHEBI:33019"/>
        <dbReference type="ChEBI" id="CHEBI:58017"/>
        <dbReference type="ChEBI" id="CHEBI:456215"/>
        <dbReference type="EC" id="2.4.2.7"/>
    </reaction>
</comment>
<comment type="pathway">
    <text evidence="1">Purine metabolism; AMP biosynthesis via salvage pathway; AMP from adenine: step 1/1.</text>
</comment>
<comment type="subunit">
    <text evidence="1">Homodimer.</text>
</comment>
<comment type="subcellular location">
    <subcellularLocation>
        <location evidence="1">Cytoplasm</location>
    </subcellularLocation>
</comment>
<comment type="similarity">
    <text evidence="1">Belongs to the purine/pyrimidine phosphoribosyltransferase family.</text>
</comment>
<accession>A8ZWU1</accession>
<gene>
    <name evidence="1" type="primary">apt</name>
    <name type="ordered locus">Dole_2619</name>
</gene>
<organism>
    <name type="scientific">Desulfosudis oleivorans (strain DSM 6200 / JCM 39069 / Hxd3)</name>
    <name type="common">Desulfococcus oleovorans</name>
    <dbReference type="NCBI Taxonomy" id="96561"/>
    <lineage>
        <taxon>Bacteria</taxon>
        <taxon>Pseudomonadati</taxon>
        <taxon>Thermodesulfobacteriota</taxon>
        <taxon>Desulfobacteria</taxon>
        <taxon>Desulfobacterales</taxon>
        <taxon>Desulfosudaceae</taxon>
        <taxon>Desulfosudis</taxon>
    </lineage>
</organism>
<keyword id="KW-0963">Cytoplasm</keyword>
<keyword id="KW-0328">Glycosyltransferase</keyword>
<keyword id="KW-0660">Purine salvage</keyword>
<keyword id="KW-1185">Reference proteome</keyword>
<keyword id="KW-0808">Transferase</keyword>
<proteinExistence type="inferred from homology"/>
<protein>
    <recommendedName>
        <fullName evidence="1">Adenine phosphoribosyltransferase</fullName>
        <shortName evidence="1">APRT</shortName>
        <ecNumber evidence="1">2.4.2.7</ecNumber>
    </recommendedName>
</protein>
<dbReference type="EC" id="2.4.2.7" evidence="1"/>
<dbReference type="EMBL" id="CP000859">
    <property type="protein sequence ID" value="ABW68422.1"/>
    <property type="molecule type" value="Genomic_DNA"/>
</dbReference>
<dbReference type="RefSeq" id="WP_012176034.1">
    <property type="nucleotide sequence ID" value="NC_009943.1"/>
</dbReference>
<dbReference type="SMR" id="A8ZWU1"/>
<dbReference type="STRING" id="96561.Dole_2619"/>
<dbReference type="KEGG" id="dol:Dole_2619"/>
<dbReference type="eggNOG" id="COG0503">
    <property type="taxonomic scope" value="Bacteria"/>
</dbReference>
<dbReference type="HOGENOM" id="CLU_063339_3_0_7"/>
<dbReference type="OrthoDB" id="9803963at2"/>
<dbReference type="UniPathway" id="UPA00588">
    <property type="reaction ID" value="UER00646"/>
</dbReference>
<dbReference type="Proteomes" id="UP000008561">
    <property type="component" value="Chromosome"/>
</dbReference>
<dbReference type="GO" id="GO:0005737">
    <property type="term" value="C:cytoplasm"/>
    <property type="evidence" value="ECO:0007669"/>
    <property type="project" value="UniProtKB-SubCell"/>
</dbReference>
<dbReference type="GO" id="GO:0002055">
    <property type="term" value="F:adenine binding"/>
    <property type="evidence" value="ECO:0007669"/>
    <property type="project" value="TreeGrafter"/>
</dbReference>
<dbReference type="GO" id="GO:0003999">
    <property type="term" value="F:adenine phosphoribosyltransferase activity"/>
    <property type="evidence" value="ECO:0007669"/>
    <property type="project" value="UniProtKB-UniRule"/>
</dbReference>
<dbReference type="GO" id="GO:0016208">
    <property type="term" value="F:AMP binding"/>
    <property type="evidence" value="ECO:0007669"/>
    <property type="project" value="TreeGrafter"/>
</dbReference>
<dbReference type="GO" id="GO:0006168">
    <property type="term" value="P:adenine salvage"/>
    <property type="evidence" value="ECO:0007669"/>
    <property type="project" value="InterPro"/>
</dbReference>
<dbReference type="GO" id="GO:0044209">
    <property type="term" value="P:AMP salvage"/>
    <property type="evidence" value="ECO:0007669"/>
    <property type="project" value="UniProtKB-UniRule"/>
</dbReference>
<dbReference type="GO" id="GO:0006166">
    <property type="term" value="P:purine ribonucleoside salvage"/>
    <property type="evidence" value="ECO:0007669"/>
    <property type="project" value="UniProtKB-KW"/>
</dbReference>
<dbReference type="CDD" id="cd06223">
    <property type="entry name" value="PRTases_typeI"/>
    <property type="match status" value="1"/>
</dbReference>
<dbReference type="FunFam" id="3.40.50.2020:FF:000004">
    <property type="entry name" value="Adenine phosphoribosyltransferase"/>
    <property type="match status" value="1"/>
</dbReference>
<dbReference type="Gene3D" id="3.40.50.2020">
    <property type="match status" value="1"/>
</dbReference>
<dbReference type="HAMAP" id="MF_00004">
    <property type="entry name" value="Aden_phosphoribosyltr"/>
    <property type="match status" value="1"/>
</dbReference>
<dbReference type="InterPro" id="IPR005764">
    <property type="entry name" value="Ade_phspho_trans"/>
</dbReference>
<dbReference type="InterPro" id="IPR000836">
    <property type="entry name" value="PRibTrfase_dom"/>
</dbReference>
<dbReference type="InterPro" id="IPR029057">
    <property type="entry name" value="PRTase-like"/>
</dbReference>
<dbReference type="InterPro" id="IPR050054">
    <property type="entry name" value="UPRTase/APRTase"/>
</dbReference>
<dbReference type="NCBIfam" id="TIGR01090">
    <property type="entry name" value="apt"/>
    <property type="match status" value="1"/>
</dbReference>
<dbReference type="NCBIfam" id="NF002633">
    <property type="entry name" value="PRK02304.1-2"/>
    <property type="match status" value="1"/>
</dbReference>
<dbReference type="NCBIfam" id="NF002634">
    <property type="entry name" value="PRK02304.1-3"/>
    <property type="match status" value="1"/>
</dbReference>
<dbReference type="NCBIfam" id="NF002636">
    <property type="entry name" value="PRK02304.1-5"/>
    <property type="match status" value="1"/>
</dbReference>
<dbReference type="PANTHER" id="PTHR32315">
    <property type="entry name" value="ADENINE PHOSPHORIBOSYLTRANSFERASE"/>
    <property type="match status" value="1"/>
</dbReference>
<dbReference type="PANTHER" id="PTHR32315:SF3">
    <property type="entry name" value="ADENINE PHOSPHORIBOSYLTRANSFERASE"/>
    <property type="match status" value="1"/>
</dbReference>
<dbReference type="Pfam" id="PF00156">
    <property type="entry name" value="Pribosyltran"/>
    <property type="match status" value="1"/>
</dbReference>
<dbReference type="SUPFAM" id="SSF53271">
    <property type="entry name" value="PRTase-like"/>
    <property type="match status" value="1"/>
</dbReference>
<dbReference type="PROSITE" id="PS00103">
    <property type="entry name" value="PUR_PYR_PR_TRANSFER"/>
    <property type="match status" value="1"/>
</dbReference>
<name>APT_DESOH</name>